<feature type="chain" id="PRO_0000307972" description="Large ribosomal subunit protein uL1">
    <location>
        <begin position="1"/>
        <end position="232"/>
    </location>
</feature>
<keyword id="KW-0678">Repressor</keyword>
<keyword id="KW-0687">Ribonucleoprotein</keyword>
<keyword id="KW-0689">Ribosomal protein</keyword>
<keyword id="KW-0694">RNA-binding</keyword>
<keyword id="KW-0699">rRNA-binding</keyword>
<keyword id="KW-0810">Translation regulation</keyword>
<keyword id="KW-0820">tRNA-binding</keyword>
<accession>A0K3L4</accession>
<protein>
    <recommendedName>
        <fullName evidence="1">Large ribosomal subunit protein uL1</fullName>
    </recommendedName>
    <alternativeName>
        <fullName evidence="2">50S ribosomal protein L1</fullName>
    </alternativeName>
</protein>
<sequence length="232" mass="24362">MAKISKRRQAFAAKVDRQKLYAIEDALSLVKECASAKFDESIDVAVQLGIDAKKSDQVVRGSVVLPAGTGKSVRVAVFAQGEKAEQARAAGAEIVGMEDLAEQIKAGQMDFDIVIASPDTMRIVGTLGQILGPRGLMPNPKVGTVTPDVATAVKNAKAGQVQFRVDKAGIIHATIGRASFEPTALRSNLSALIEALQKAKPATSKGVYLRKIALSSTMGVGVRVDHATLAAQ</sequence>
<proteinExistence type="inferred from homology"/>
<organism>
    <name type="scientific">Burkholderia cenocepacia (strain HI2424)</name>
    <dbReference type="NCBI Taxonomy" id="331272"/>
    <lineage>
        <taxon>Bacteria</taxon>
        <taxon>Pseudomonadati</taxon>
        <taxon>Pseudomonadota</taxon>
        <taxon>Betaproteobacteria</taxon>
        <taxon>Burkholderiales</taxon>
        <taxon>Burkholderiaceae</taxon>
        <taxon>Burkholderia</taxon>
        <taxon>Burkholderia cepacia complex</taxon>
    </lineage>
</organism>
<reference key="1">
    <citation type="submission" date="2006-08" db="EMBL/GenBank/DDBJ databases">
        <title>Complete sequence of chromosome 1 of Burkholderia cenocepacia HI2424.</title>
        <authorList>
            <person name="Copeland A."/>
            <person name="Lucas S."/>
            <person name="Lapidus A."/>
            <person name="Barry K."/>
            <person name="Detter J.C."/>
            <person name="Glavina del Rio T."/>
            <person name="Hammon N."/>
            <person name="Israni S."/>
            <person name="Pitluck S."/>
            <person name="Chain P."/>
            <person name="Malfatti S."/>
            <person name="Shin M."/>
            <person name="Vergez L."/>
            <person name="Schmutz J."/>
            <person name="Larimer F."/>
            <person name="Land M."/>
            <person name="Hauser L."/>
            <person name="Kyrpides N."/>
            <person name="Kim E."/>
            <person name="LiPuma J.J."/>
            <person name="Gonzalez C.F."/>
            <person name="Konstantinidis K."/>
            <person name="Tiedje J.M."/>
            <person name="Richardson P."/>
        </authorList>
    </citation>
    <scope>NUCLEOTIDE SEQUENCE [LARGE SCALE GENOMIC DNA]</scope>
    <source>
        <strain>HI2424</strain>
    </source>
</reference>
<dbReference type="EMBL" id="CP000458">
    <property type="protein sequence ID" value="ABK07091.1"/>
    <property type="molecule type" value="Genomic_DNA"/>
</dbReference>
<dbReference type="RefSeq" id="WP_006477200.1">
    <property type="nucleotide sequence ID" value="NC_008542.1"/>
</dbReference>
<dbReference type="SMR" id="A0K3L4"/>
<dbReference type="GeneID" id="83047120"/>
<dbReference type="KEGG" id="bch:Bcen2424_0337"/>
<dbReference type="HOGENOM" id="CLU_062853_0_0_4"/>
<dbReference type="GO" id="GO:0022625">
    <property type="term" value="C:cytosolic large ribosomal subunit"/>
    <property type="evidence" value="ECO:0007669"/>
    <property type="project" value="TreeGrafter"/>
</dbReference>
<dbReference type="GO" id="GO:0019843">
    <property type="term" value="F:rRNA binding"/>
    <property type="evidence" value="ECO:0007669"/>
    <property type="project" value="UniProtKB-UniRule"/>
</dbReference>
<dbReference type="GO" id="GO:0003735">
    <property type="term" value="F:structural constituent of ribosome"/>
    <property type="evidence" value="ECO:0007669"/>
    <property type="project" value="InterPro"/>
</dbReference>
<dbReference type="GO" id="GO:0000049">
    <property type="term" value="F:tRNA binding"/>
    <property type="evidence" value="ECO:0007669"/>
    <property type="project" value="UniProtKB-KW"/>
</dbReference>
<dbReference type="GO" id="GO:0006417">
    <property type="term" value="P:regulation of translation"/>
    <property type="evidence" value="ECO:0007669"/>
    <property type="project" value="UniProtKB-KW"/>
</dbReference>
<dbReference type="GO" id="GO:0006412">
    <property type="term" value="P:translation"/>
    <property type="evidence" value="ECO:0007669"/>
    <property type="project" value="UniProtKB-UniRule"/>
</dbReference>
<dbReference type="CDD" id="cd00403">
    <property type="entry name" value="Ribosomal_L1"/>
    <property type="match status" value="1"/>
</dbReference>
<dbReference type="FunFam" id="3.40.50.790:FF:000001">
    <property type="entry name" value="50S ribosomal protein L1"/>
    <property type="match status" value="1"/>
</dbReference>
<dbReference type="Gene3D" id="3.30.190.20">
    <property type="match status" value="1"/>
</dbReference>
<dbReference type="Gene3D" id="3.40.50.790">
    <property type="match status" value="1"/>
</dbReference>
<dbReference type="HAMAP" id="MF_01318_B">
    <property type="entry name" value="Ribosomal_uL1_B"/>
    <property type="match status" value="1"/>
</dbReference>
<dbReference type="InterPro" id="IPR005878">
    <property type="entry name" value="Ribosom_uL1_bac-type"/>
</dbReference>
<dbReference type="InterPro" id="IPR002143">
    <property type="entry name" value="Ribosomal_uL1"/>
</dbReference>
<dbReference type="InterPro" id="IPR023674">
    <property type="entry name" value="Ribosomal_uL1-like"/>
</dbReference>
<dbReference type="InterPro" id="IPR028364">
    <property type="entry name" value="Ribosomal_uL1/biogenesis"/>
</dbReference>
<dbReference type="InterPro" id="IPR016095">
    <property type="entry name" value="Ribosomal_uL1_3-a/b-sand"/>
</dbReference>
<dbReference type="InterPro" id="IPR023673">
    <property type="entry name" value="Ribosomal_uL1_CS"/>
</dbReference>
<dbReference type="NCBIfam" id="TIGR01169">
    <property type="entry name" value="rplA_bact"/>
    <property type="match status" value="1"/>
</dbReference>
<dbReference type="PANTHER" id="PTHR36427">
    <property type="entry name" value="54S RIBOSOMAL PROTEIN L1, MITOCHONDRIAL"/>
    <property type="match status" value="1"/>
</dbReference>
<dbReference type="PANTHER" id="PTHR36427:SF3">
    <property type="entry name" value="LARGE RIBOSOMAL SUBUNIT PROTEIN UL1M"/>
    <property type="match status" value="1"/>
</dbReference>
<dbReference type="Pfam" id="PF00687">
    <property type="entry name" value="Ribosomal_L1"/>
    <property type="match status" value="1"/>
</dbReference>
<dbReference type="PIRSF" id="PIRSF002155">
    <property type="entry name" value="Ribosomal_L1"/>
    <property type="match status" value="1"/>
</dbReference>
<dbReference type="SUPFAM" id="SSF56808">
    <property type="entry name" value="Ribosomal protein L1"/>
    <property type="match status" value="1"/>
</dbReference>
<dbReference type="PROSITE" id="PS01199">
    <property type="entry name" value="RIBOSOMAL_L1"/>
    <property type="match status" value="1"/>
</dbReference>
<evidence type="ECO:0000255" key="1">
    <source>
        <dbReference type="HAMAP-Rule" id="MF_01318"/>
    </source>
</evidence>
<evidence type="ECO:0000305" key="2"/>
<comment type="function">
    <text evidence="1">Binds directly to 23S rRNA. The L1 stalk is quite mobile in the ribosome, and is involved in E site tRNA release.</text>
</comment>
<comment type="function">
    <text evidence="1">Protein L1 is also a translational repressor protein, it controls the translation of the L11 operon by binding to its mRNA.</text>
</comment>
<comment type="subunit">
    <text evidence="1">Part of the 50S ribosomal subunit.</text>
</comment>
<comment type="similarity">
    <text evidence="1">Belongs to the universal ribosomal protein uL1 family.</text>
</comment>
<name>RL1_BURCH</name>
<gene>
    <name evidence="1" type="primary">rplA</name>
    <name type="ordered locus">Bcen2424_0337</name>
</gene>